<reference key="1">
    <citation type="submission" date="2006-09" db="EMBL/GenBank/DDBJ databases">
        <authorList>
            <consortium name="The Klebsiella pneumonia Genome Sequencing Project"/>
            <person name="McClelland M."/>
            <person name="Sanderson E.K."/>
            <person name="Spieth J."/>
            <person name="Clifton W.S."/>
            <person name="Latreille P."/>
            <person name="Sabo A."/>
            <person name="Pepin K."/>
            <person name="Bhonagiri V."/>
            <person name="Porwollik S."/>
            <person name="Ali J."/>
            <person name="Wilson R.K."/>
        </authorList>
    </citation>
    <scope>NUCLEOTIDE SEQUENCE [LARGE SCALE GENOMIC DNA]</scope>
    <source>
        <strain>ATCC 700721 / MGH 78578</strain>
    </source>
</reference>
<evidence type="ECO:0000255" key="1">
    <source>
        <dbReference type="HAMAP-Rule" id="MF_01659"/>
    </source>
</evidence>
<accession>A6TBV8</accession>
<protein>
    <recommendedName>
        <fullName evidence="1">2-succinyl-5-enolpyruvyl-6-hydroxy-3-cyclohexene-1-carboxylate synthase</fullName>
        <shortName evidence="1">SEPHCHC synthase</shortName>
        <ecNumber evidence="1">2.2.1.9</ecNumber>
    </recommendedName>
    <alternativeName>
        <fullName evidence="1">Menaquinone biosynthesis protein MenD</fullName>
    </alternativeName>
</protein>
<dbReference type="EC" id="2.2.1.9" evidence="1"/>
<dbReference type="EMBL" id="CP000647">
    <property type="protein sequence ID" value="ABR78079.1"/>
    <property type="molecule type" value="Genomic_DNA"/>
</dbReference>
<dbReference type="RefSeq" id="WP_015958757.1">
    <property type="nucleotide sequence ID" value="NC_009648.1"/>
</dbReference>
<dbReference type="SMR" id="A6TBV8"/>
<dbReference type="STRING" id="272620.KPN_02662"/>
<dbReference type="PaxDb" id="272620-KPN_02662"/>
<dbReference type="DNASU" id="5339995"/>
<dbReference type="EnsemblBacteria" id="ABR78079">
    <property type="protein sequence ID" value="ABR78079"/>
    <property type="gene ID" value="KPN_02662"/>
</dbReference>
<dbReference type="KEGG" id="kpn:KPN_02662"/>
<dbReference type="HOGENOM" id="CLU_006051_3_0_6"/>
<dbReference type="UniPathway" id="UPA00079"/>
<dbReference type="UniPathway" id="UPA01057">
    <property type="reaction ID" value="UER00164"/>
</dbReference>
<dbReference type="Proteomes" id="UP000000265">
    <property type="component" value="Chromosome"/>
</dbReference>
<dbReference type="GO" id="GO:0070204">
    <property type="term" value="F:2-succinyl-5-enolpyruvyl-6-hydroxy-3-cyclohexene-1-carboxylic-acid synthase activity"/>
    <property type="evidence" value="ECO:0007669"/>
    <property type="project" value="UniProtKB-UniRule"/>
</dbReference>
<dbReference type="GO" id="GO:0000287">
    <property type="term" value="F:magnesium ion binding"/>
    <property type="evidence" value="ECO:0007669"/>
    <property type="project" value="UniProtKB-UniRule"/>
</dbReference>
<dbReference type="GO" id="GO:0030145">
    <property type="term" value="F:manganese ion binding"/>
    <property type="evidence" value="ECO:0007669"/>
    <property type="project" value="UniProtKB-UniRule"/>
</dbReference>
<dbReference type="GO" id="GO:0030976">
    <property type="term" value="F:thiamine pyrophosphate binding"/>
    <property type="evidence" value="ECO:0007669"/>
    <property type="project" value="UniProtKB-UniRule"/>
</dbReference>
<dbReference type="GO" id="GO:0009234">
    <property type="term" value="P:menaquinone biosynthetic process"/>
    <property type="evidence" value="ECO:0007669"/>
    <property type="project" value="UniProtKB-UniRule"/>
</dbReference>
<dbReference type="CDD" id="cd07037">
    <property type="entry name" value="TPP_PYR_MenD"/>
    <property type="match status" value="1"/>
</dbReference>
<dbReference type="CDD" id="cd02009">
    <property type="entry name" value="TPP_SHCHC_synthase"/>
    <property type="match status" value="1"/>
</dbReference>
<dbReference type="FunFam" id="3.40.50.970:FF:000029">
    <property type="entry name" value="2-succinyl-5-enolpyruvyl-6-hydroxy-3-cyclohexene-1-carboxylate synthase"/>
    <property type="match status" value="1"/>
</dbReference>
<dbReference type="Gene3D" id="3.40.50.970">
    <property type="match status" value="2"/>
</dbReference>
<dbReference type="Gene3D" id="3.40.50.1220">
    <property type="entry name" value="TPP-binding domain"/>
    <property type="match status" value="1"/>
</dbReference>
<dbReference type="HAMAP" id="MF_01659">
    <property type="entry name" value="MenD"/>
    <property type="match status" value="1"/>
</dbReference>
<dbReference type="InterPro" id="IPR004433">
    <property type="entry name" value="MenaQ_synth_MenD"/>
</dbReference>
<dbReference type="InterPro" id="IPR032264">
    <property type="entry name" value="MenD_middle"/>
</dbReference>
<dbReference type="InterPro" id="IPR029061">
    <property type="entry name" value="THDP-binding"/>
</dbReference>
<dbReference type="InterPro" id="IPR012001">
    <property type="entry name" value="Thiamin_PyroP_enz_TPP-bd_dom"/>
</dbReference>
<dbReference type="InterPro" id="IPR011766">
    <property type="entry name" value="TPP_enzyme_TPP-bd"/>
</dbReference>
<dbReference type="NCBIfam" id="TIGR00173">
    <property type="entry name" value="menD"/>
    <property type="match status" value="1"/>
</dbReference>
<dbReference type="PANTHER" id="PTHR42916">
    <property type="entry name" value="2-SUCCINYL-5-ENOLPYRUVYL-6-HYDROXY-3-CYCLOHEXENE-1-CARBOXYLATE SYNTHASE"/>
    <property type="match status" value="1"/>
</dbReference>
<dbReference type="PANTHER" id="PTHR42916:SF1">
    <property type="entry name" value="PROTEIN PHYLLO, CHLOROPLASTIC"/>
    <property type="match status" value="1"/>
</dbReference>
<dbReference type="Pfam" id="PF02775">
    <property type="entry name" value="TPP_enzyme_C"/>
    <property type="match status" value="1"/>
</dbReference>
<dbReference type="Pfam" id="PF16582">
    <property type="entry name" value="TPP_enzyme_M_2"/>
    <property type="match status" value="1"/>
</dbReference>
<dbReference type="Pfam" id="PF02776">
    <property type="entry name" value="TPP_enzyme_N"/>
    <property type="match status" value="1"/>
</dbReference>
<dbReference type="PIRSF" id="PIRSF004983">
    <property type="entry name" value="MenD"/>
    <property type="match status" value="1"/>
</dbReference>
<dbReference type="SUPFAM" id="SSF52518">
    <property type="entry name" value="Thiamin diphosphate-binding fold (THDP-binding)"/>
    <property type="match status" value="2"/>
</dbReference>
<name>MEND_KLEP7</name>
<feature type="chain" id="PRO_0000341760" description="2-succinyl-5-enolpyruvyl-6-hydroxy-3-cyclohexene-1-carboxylate synthase">
    <location>
        <begin position="1"/>
        <end position="556"/>
    </location>
</feature>
<keyword id="KW-0460">Magnesium</keyword>
<keyword id="KW-0464">Manganese</keyword>
<keyword id="KW-0474">Menaquinone biosynthesis</keyword>
<keyword id="KW-0479">Metal-binding</keyword>
<keyword id="KW-0786">Thiamine pyrophosphate</keyword>
<keyword id="KW-0808">Transferase</keyword>
<comment type="function">
    <text evidence="1">Catalyzes the thiamine diphosphate-dependent decarboxylation of 2-oxoglutarate and the subsequent addition of the resulting succinic semialdehyde-thiamine pyrophosphate anion to isochorismate to yield 2-succinyl-5-enolpyruvyl-6-hydroxy-3-cyclohexene-1-carboxylate (SEPHCHC).</text>
</comment>
<comment type="catalytic activity">
    <reaction evidence="1">
        <text>isochorismate + 2-oxoglutarate + H(+) = 5-enolpyruvoyl-6-hydroxy-2-succinyl-cyclohex-3-ene-1-carboxylate + CO2</text>
        <dbReference type="Rhea" id="RHEA:25593"/>
        <dbReference type="ChEBI" id="CHEBI:15378"/>
        <dbReference type="ChEBI" id="CHEBI:16526"/>
        <dbReference type="ChEBI" id="CHEBI:16810"/>
        <dbReference type="ChEBI" id="CHEBI:29780"/>
        <dbReference type="ChEBI" id="CHEBI:58818"/>
        <dbReference type="EC" id="2.2.1.9"/>
    </reaction>
</comment>
<comment type="cofactor">
    <cofactor evidence="1">
        <name>Mg(2+)</name>
        <dbReference type="ChEBI" id="CHEBI:18420"/>
    </cofactor>
    <cofactor evidence="1">
        <name>Mn(2+)</name>
        <dbReference type="ChEBI" id="CHEBI:29035"/>
    </cofactor>
</comment>
<comment type="cofactor">
    <cofactor evidence="1">
        <name>thiamine diphosphate</name>
        <dbReference type="ChEBI" id="CHEBI:58937"/>
    </cofactor>
    <text evidence="1">Binds 1 thiamine pyrophosphate per subunit.</text>
</comment>
<comment type="pathway">
    <text evidence="1">Quinol/quinone metabolism; 1,4-dihydroxy-2-naphthoate biosynthesis; 1,4-dihydroxy-2-naphthoate from chorismate: step 2/7.</text>
</comment>
<comment type="pathway">
    <text evidence="1">Quinol/quinone metabolism; menaquinone biosynthesis.</text>
</comment>
<comment type="subunit">
    <text evidence="1">Homodimer.</text>
</comment>
<comment type="similarity">
    <text evidence="1">Belongs to the TPP enzyme family. MenD subfamily.</text>
</comment>
<gene>
    <name evidence="1" type="primary">menD</name>
    <name type="ordered locus">KPN78578_26180</name>
    <name type="ORF">KPN_02662</name>
</gene>
<organism>
    <name type="scientific">Klebsiella pneumoniae subsp. pneumoniae (strain ATCC 700721 / MGH 78578)</name>
    <dbReference type="NCBI Taxonomy" id="272620"/>
    <lineage>
        <taxon>Bacteria</taxon>
        <taxon>Pseudomonadati</taxon>
        <taxon>Pseudomonadota</taxon>
        <taxon>Gammaproteobacteria</taxon>
        <taxon>Enterobacterales</taxon>
        <taxon>Enterobacteriaceae</taxon>
        <taxon>Klebsiella/Raoultella group</taxon>
        <taxon>Klebsiella</taxon>
        <taxon>Klebsiella pneumoniae complex</taxon>
    </lineage>
</organism>
<proteinExistence type="inferred from homology"/>
<sequence>MSVSAFNRRWAAVILEALTRHGVQHICIAPGSRSTPLTLAAAENRAFIHHTHFDERGLGHLALGLAKASRQPVAVIVTSGTATANLYPALIEAGLTGEKLILLTADRPPELIDCGANQAIRQPGMFASHPAQTISLPRPSQDIPARWLVSTIDQALGALHAGGVHINCPFAEPLYGDMDETGVEWQQQLGNWWQSDKPWLRQALQLESEKQRDWFFWRQKRGVVVAGRMSAAEGKKVAEWAQTLGWPLIGDVLSQTGQPLPCADLWLGNGKAVSELAQAQIVVQLGSSLTGKRVLQWQATCEPDEYWLVDNLPGRLDPAQHCGRRLLSSVERWLELHPAEKRQPWATVIPQLAGQAWQAAVASNEPFGEAQLAQRIRRYLPEQGQLFVGNSLVVRLIDALAQLPAGYPVYSNRGASGIDGLIATAAGVQRASARPTLAIVGDLSALYDLNSLALLRQASAPLVLIVVNNNGGQIFSMLPTPQDERRQFYLMPQDVDFSHAAVMFGLAYHRPDDWPSLDEALAGAWRRAGATVIELAVNETDGAQTLQQLLAQVSRL</sequence>